<dbReference type="EC" id="4.3.3.6" evidence="1"/>
<dbReference type="EC" id="3.5.1.2" evidence="1"/>
<dbReference type="EMBL" id="CP000511">
    <property type="protein sequence ID" value="ABM13376.1"/>
    <property type="molecule type" value="Genomic_DNA"/>
</dbReference>
<dbReference type="RefSeq" id="WP_011779785.1">
    <property type="nucleotide sequence ID" value="NZ_JACKSD010000179.1"/>
</dbReference>
<dbReference type="SMR" id="A1T876"/>
<dbReference type="STRING" id="350058.Mvan_2566"/>
<dbReference type="KEGG" id="mva:Mvan_2566"/>
<dbReference type="eggNOG" id="COG0311">
    <property type="taxonomic scope" value="Bacteria"/>
</dbReference>
<dbReference type="HOGENOM" id="CLU_069674_2_0_11"/>
<dbReference type="UniPathway" id="UPA00245"/>
<dbReference type="Proteomes" id="UP000009159">
    <property type="component" value="Chromosome"/>
</dbReference>
<dbReference type="GO" id="GO:0005829">
    <property type="term" value="C:cytosol"/>
    <property type="evidence" value="ECO:0007669"/>
    <property type="project" value="TreeGrafter"/>
</dbReference>
<dbReference type="GO" id="GO:1903600">
    <property type="term" value="C:glutaminase complex"/>
    <property type="evidence" value="ECO:0007669"/>
    <property type="project" value="TreeGrafter"/>
</dbReference>
<dbReference type="GO" id="GO:0004359">
    <property type="term" value="F:glutaminase activity"/>
    <property type="evidence" value="ECO:0007669"/>
    <property type="project" value="UniProtKB-UniRule"/>
</dbReference>
<dbReference type="GO" id="GO:0036381">
    <property type="term" value="F:pyridoxal 5'-phosphate synthase (glutamine hydrolysing) activity"/>
    <property type="evidence" value="ECO:0007669"/>
    <property type="project" value="UniProtKB-UniRule"/>
</dbReference>
<dbReference type="GO" id="GO:0006543">
    <property type="term" value="P:glutamine catabolic process"/>
    <property type="evidence" value="ECO:0007669"/>
    <property type="project" value="UniProtKB-UniRule"/>
</dbReference>
<dbReference type="GO" id="GO:0042823">
    <property type="term" value="P:pyridoxal phosphate biosynthetic process"/>
    <property type="evidence" value="ECO:0007669"/>
    <property type="project" value="UniProtKB-UniRule"/>
</dbReference>
<dbReference type="GO" id="GO:0008614">
    <property type="term" value="P:pyridoxine metabolic process"/>
    <property type="evidence" value="ECO:0007669"/>
    <property type="project" value="TreeGrafter"/>
</dbReference>
<dbReference type="CDD" id="cd01749">
    <property type="entry name" value="GATase1_PB"/>
    <property type="match status" value="1"/>
</dbReference>
<dbReference type="FunFam" id="3.40.50.880:FF:000010">
    <property type="entry name" value="uncharacterized protein LOC100176842 isoform X2"/>
    <property type="match status" value="1"/>
</dbReference>
<dbReference type="Gene3D" id="3.40.50.880">
    <property type="match status" value="1"/>
</dbReference>
<dbReference type="HAMAP" id="MF_01615">
    <property type="entry name" value="PdxT"/>
    <property type="match status" value="1"/>
</dbReference>
<dbReference type="InterPro" id="IPR029062">
    <property type="entry name" value="Class_I_gatase-like"/>
</dbReference>
<dbReference type="InterPro" id="IPR002161">
    <property type="entry name" value="PdxT/SNO"/>
</dbReference>
<dbReference type="InterPro" id="IPR021196">
    <property type="entry name" value="PdxT/SNO_CS"/>
</dbReference>
<dbReference type="NCBIfam" id="TIGR03800">
    <property type="entry name" value="PLP_synth_Pdx2"/>
    <property type="match status" value="1"/>
</dbReference>
<dbReference type="PANTHER" id="PTHR31559">
    <property type="entry name" value="PYRIDOXAL 5'-PHOSPHATE SYNTHASE SUBUNIT SNO"/>
    <property type="match status" value="1"/>
</dbReference>
<dbReference type="PANTHER" id="PTHR31559:SF0">
    <property type="entry name" value="PYRIDOXAL 5'-PHOSPHATE SYNTHASE SUBUNIT SNO1-RELATED"/>
    <property type="match status" value="1"/>
</dbReference>
<dbReference type="Pfam" id="PF01174">
    <property type="entry name" value="SNO"/>
    <property type="match status" value="1"/>
</dbReference>
<dbReference type="PIRSF" id="PIRSF005639">
    <property type="entry name" value="Glut_amidoT_SNO"/>
    <property type="match status" value="1"/>
</dbReference>
<dbReference type="SUPFAM" id="SSF52317">
    <property type="entry name" value="Class I glutamine amidotransferase-like"/>
    <property type="match status" value="1"/>
</dbReference>
<dbReference type="PROSITE" id="PS01236">
    <property type="entry name" value="PDXT_SNO_1"/>
    <property type="match status" value="1"/>
</dbReference>
<dbReference type="PROSITE" id="PS51130">
    <property type="entry name" value="PDXT_SNO_2"/>
    <property type="match status" value="1"/>
</dbReference>
<comment type="function">
    <text evidence="1">Catalyzes the hydrolysis of glutamine to glutamate and ammonia as part of the biosynthesis of pyridoxal 5'-phosphate. The resulting ammonia molecule is channeled to the active site of PdxS.</text>
</comment>
<comment type="catalytic activity">
    <reaction evidence="1">
        <text>aldehydo-D-ribose 5-phosphate + D-glyceraldehyde 3-phosphate + L-glutamine = pyridoxal 5'-phosphate + L-glutamate + phosphate + 3 H2O + H(+)</text>
        <dbReference type="Rhea" id="RHEA:31507"/>
        <dbReference type="ChEBI" id="CHEBI:15377"/>
        <dbReference type="ChEBI" id="CHEBI:15378"/>
        <dbReference type="ChEBI" id="CHEBI:29985"/>
        <dbReference type="ChEBI" id="CHEBI:43474"/>
        <dbReference type="ChEBI" id="CHEBI:58273"/>
        <dbReference type="ChEBI" id="CHEBI:58359"/>
        <dbReference type="ChEBI" id="CHEBI:59776"/>
        <dbReference type="ChEBI" id="CHEBI:597326"/>
        <dbReference type="EC" id="4.3.3.6"/>
    </reaction>
</comment>
<comment type="catalytic activity">
    <reaction evidence="1">
        <text>L-glutamine + H2O = L-glutamate + NH4(+)</text>
        <dbReference type="Rhea" id="RHEA:15889"/>
        <dbReference type="ChEBI" id="CHEBI:15377"/>
        <dbReference type="ChEBI" id="CHEBI:28938"/>
        <dbReference type="ChEBI" id="CHEBI:29985"/>
        <dbReference type="ChEBI" id="CHEBI:58359"/>
        <dbReference type="EC" id="3.5.1.2"/>
    </reaction>
</comment>
<comment type="pathway">
    <text evidence="1">Cofactor biosynthesis; pyridoxal 5'-phosphate biosynthesis.</text>
</comment>
<comment type="subunit">
    <text evidence="1">In the presence of PdxS, forms a dodecamer of heterodimers. Only shows activity in the heterodimer.</text>
</comment>
<comment type="similarity">
    <text evidence="1">Belongs to the glutaminase PdxT/SNO family.</text>
</comment>
<evidence type="ECO:0000255" key="1">
    <source>
        <dbReference type="HAMAP-Rule" id="MF_01615"/>
    </source>
</evidence>
<sequence length="195" mass="20824">MSAPQVGVLALQGDTREHLAALREAGAEARTVRRLDELNSVDALVIPGGESTAMSHLLREFGLLEPLRARLAEGMPAYGSCAGMILLATEIADAGVAGREALPLGGIDMTVRRNAFGRQVDSFEEDVEFEGLDGPVHAVFIRAPWVERVGPDVEVLARAGGHPVAVRQGKMLATAFHPEVTGDRRVHRLFVASLS</sequence>
<feature type="chain" id="PRO_0000293009" description="Pyridoxal 5'-phosphate synthase subunit PdxT">
    <location>
        <begin position="1"/>
        <end position="195"/>
    </location>
</feature>
<feature type="active site" description="Nucleophile" evidence="1">
    <location>
        <position position="81"/>
    </location>
</feature>
<feature type="active site" description="Charge relay system" evidence="1">
    <location>
        <position position="177"/>
    </location>
</feature>
<feature type="active site" description="Charge relay system" evidence="1">
    <location>
        <position position="179"/>
    </location>
</feature>
<feature type="binding site" evidence="1">
    <location>
        <begin position="49"/>
        <end position="51"/>
    </location>
    <ligand>
        <name>L-glutamine</name>
        <dbReference type="ChEBI" id="CHEBI:58359"/>
    </ligand>
</feature>
<feature type="binding site" evidence="1">
    <location>
        <position position="113"/>
    </location>
    <ligand>
        <name>L-glutamine</name>
        <dbReference type="ChEBI" id="CHEBI:58359"/>
    </ligand>
</feature>
<feature type="binding site" evidence="1">
    <location>
        <begin position="141"/>
        <end position="142"/>
    </location>
    <ligand>
        <name>L-glutamine</name>
        <dbReference type="ChEBI" id="CHEBI:58359"/>
    </ligand>
</feature>
<keyword id="KW-0315">Glutamine amidotransferase</keyword>
<keyword id="KW-0378">Hydrolase</keyword>
<keyword id="KW-0456">Lyase</keyword>
<keyword id="KW-0663">Pyridoxal phosphate</keyword>
<reference key="1">
    <citation type="submission" date="2006-12" db="EMBL/GenBank/DDBJ databases">
        <title>Complete sequence of Mycobacterium vanbaalenii PYR-1.</title>
        <authorList>
            <consortium name="US DOE Joint Genome Institute"/>
            <person name="Copeland A."/>
            <person name="Lucas S."/>
            <person name="Lapidus A."/>
            <person name="Barry K."/>
            <person name="Detter J.C."/>
            <person name="Glavina del Rio T."/>
            <person name="Hammon N."/>
            <person name="Israni S."/>
            <person name="Dalin E."/>
            <person name="Tice H."/>
            <person name="Pitluck S."/>
            <person name="Singan V."/>
            <person name="Schmutz J."/>
            <person name="Larimer F."/>
            <person name="Land M."/>
            <person name="Hauser L."/>
            <person name="Kyrpides N."/>
            <person name="Anderson I.J."/>
            <person name="Miller C."/>
            <person name="Richardson P."/>
        </authorList>
    </citation>
    <scope>NUCLEOTIDE SEQUENCE [LARGE SCALE GENOMIC DNA]</scope>
    <source>
        <strain>DSM 7251 / JCM 13017 / BCRC 16820 / KCTC 9966 / NRRL B-24157 / PYR-1</strain>
    </source>
</reference>
<protein>
    <recommendedName>
        <fullName evidence="1">Pyridoxal 5'-phosphate synthase subunit PdxT</fullName>
        <ecNumber evidence="1">4.3.3.6</ecNumber>
    </recommendedName>
    <alternativeName>
        <fullName evidence="1">Pdx2</fullName>
    </alternativeName>
    <alternativeName>
        <fullName evidence="1">Pyridoxal 5'-phosphate synthase glutaminase subunit</fullName>
        <ecNumber evidence="1">3.5.1.2</ecNumber>
    </alternativeName>
</protein>
<name>PDXT_MYCVP</name>
<accession>A1T876</accession>
<proteinExistence type="inferred from homology"/>
<gene>
    <name evidence="1" type="primary">pdxT</name>
    <name type="ordered locus">Mvan_2566</name>
</gene>
<organism>
    <name type="scientific">Mycolicibacterium vanbaalenii (strain DSM 7251 / JCM 13017 / BCRC 16820 / KCTC 9966 / NRRL B-24157 / PYR-1)</name>
    <name type="common">Mycobacterium vanbaalenii</name>
    <dbReference type="NCBI Taxonomy" id="350058"/>
    <lineage>
        <taxon>Bacteria</taxon>
        <taxon>Bacillati</taxon>
        <taxon>Actinomycetota</taxon>
        <taxon>Actinomycetes</taxon>
        <taxon>Mycobacteriales</taxon>
        <taxon>Mycobacteriaceae</taxon>
        <taxon>Mycolicibacterium</taxon>
    </lineage>
</organism>